<proteinExistence type="inferred from homology"/>
<comment type="function">
    <text evidence="1">Key component of the proton channel; it plays a direct role in the translocation of protons across the membrane.</text>
</comment>
<comment type="subunit">
    <text evidence="1">F-type ATPases have 2 components, CF(1) - the catalytic core - and CF(0) - the membrane proton channel. CF(1) has five subunits: alpha(3), beta(3), gamma(1), delta(1), epsilon(1). CF(0) has four main subunits: a, b, b' and c.</text>
</comment>
<comment type="subcellular location">
    <subcellularLocation>
        <location evidence="1">Plastid</location>
        <location evidence="1">Chloroplast thylakoid membrane</location>
        <topology evidence="1">Multi-pass membrane protein</topology>
    </subcellularLocation>
</comment>
<comment type="similarity">
    <text evidence="1">Belongs to the ATPase A chain family.</text>
</comment>
<reference key="1">
    <citation type="journal article" date="2008" name="BMC Res. Notes">
        <title>The complete chloroplast genome sequence of Brachypodium distachyon: sequence comparison and phylogenetic analysis of eight grass plastomes.</title>
        <authorList>
            <person name="Bortiri E."/>
            <person name="Coleman-Derr D."/>
            <person name="Lazo G.R."/>
            <person name="Anderson O.D."/>
            <person name="Gu Y.Q."/>
        </authorList>
    </citation>
    <scope>NUCLEOTIDE SEQUENCE [LARGE SCALE GENOMIC DNA]</scope>
    <source>
        <strain>cv. Bd21</strain>
    </source>
</reference>
<gene>
    <name evidence="1" type="primary">atpI</name>
</gene>
<evidence type="ECO:0000255" key="1">
    <source>
        <dbReference type="HAMAP-Rule" id="MF_01393"/>
    </source>
</evidence>
<sequence length="247" mass="27320">MNIIPCSIKTLKGLYDISGVEVGQHFYWQIGGFQIHAQVLITSWVVITILLGSVLIAVRNPQTIPTDGQNFFEYILEFIRDLSKTQIGEEYGPWVPFIGTMFLFIFVSNWSGALLPWKIIELPHGELAAPTNDINTTVALALLTSAAYFYAGLSKKGLSYFEKYIKPTPILLPINILEDFTKPLSLSFRLFGNILADELVVVVLVSLVPLVVPIPVMFLGLFTSGIQALIFATLAAAYIGESMEGHH</sequence>
<accession>B3TN45</accession>
<geneLocation type="chloroplast"/>
<protein>
    <recommendedName>
        <fullName evidence="1">ATP synthase subunit a, chloroplastic</fullName>
    </recommendedName>
    <alternativeName>
        <fullName evidence="1">ATP synthase F0 sector subunit a</fullName>
    </alternativeName>
    <alternativeName>
        <fullName evidence="1">F-ATPase subunit IV</fullName>
    </alternativeName>
</protein>
<keyword id="KW-0066">ATP synthesis</keyword>
<keyword id="KW-0138">CF(0)</keyword>
<keyword id="KW-0150">Chloroplast</keyword>
<keyword id="KW-0375">Hydrogen ion transport</keyword>
<keyword id="KW-0406">Ion transport</keyword>
<keyword id="KW-0472">Membrane</keyword>
<keyword id="KW-0934">Plastid</keyword>
<keyword id="KW-1185">Reference proteome</keyword>
<keyword id="KW-0793">Thylakoid</keyword>
<keyword id="KW-0812">Transmembrane</keyword>
<keyword id="KW-1133">Transmembrane helix</keyword>
<keyword id="KW-0813">Transport</keyword>
<organism>
    <name type="scientific">Brachypodium distachyon</name>
    <name type="common">Purple false brome</name>
    <name type="synonym">Trachynia distachya</name>
    <dbReference type="NCBI Taxonomy" id="15368"/>
    <lineage>
        <taxon>Eukaryota</taxon>
        <taxon>Viridiplantae</taxon>
        <taxon>Streptophyta</taxon>
        <taxon>Embryophyta</taxon>
        <taxon>Tracheophyta</taxon>
        <taxon>Spermatophyta</taxon>
        <taxon>Magnoliopsida</taxon>
        <taxon>Liliopsida</taxon>
        <taxon>Poales</taxon>
        <taxon>Poaceae</taxon>
        <taxon>BOP clade</taxon>
        <taxon>Pooideae</taxon>
        <taxon>Stipodae</taxon>
        <taxon>Brachypodieae</taxon>
        <taxon>Brachypodium</taxon>
    </lineage>
</organism>
<dbReference type="EMBL" id="EU325680">
    <property type="protein sequence ID" value="ACF08634.1"/>
    <property type="molecule type" value="Genomic_DNA"/>
</dbReference>
<dbReference type="RefSeq" id="YP_002000481.1">
    <property type="nucleotide sequence ID" value="NC_011032.1"/>
</dbReference>
<dbReference type="SMR" id="B3TN45"/>
<dbReference type="FunCoup" id="B3TN45">
    <property type="interactions" value="235"/>
</dbReference>
<dbReference type="STRING" id="15368.B3TN45"/>
<dbReference type="GeneID" id="6439835"/>
<dbReference type="KEGG" id="bdi:6439835"/>
<dbReference type="InParanoid" id="B3TN45"/>
<dbReference type="Proteomes" id="UP000008810">
    <property type="component" value="Chloroplast"/>
</dbReference>
<dbReference type="ExpressionAtlas" id="B3TN45">
    <property type="expression patterns" value="baseline and differential"/>
</dbReference>
<dbReference type="GO" id="GO:0009535">
    <property type="term" value="C:chloroplast thylakoid membrane"/>
    <property type="evidence" value="ECO:0007669"/>
    <property type="project" value="UniProtKB-SubCell"/>
</dbReference>
<dbReference type="GO" id="GO:0005886">
    <property type="term" value="C:plasma membrane"/>
    <property type="evidence" value="ECO:0007669"/>
    <property type="project" value="UniProtKB-UniRule"/>
</dbReference>
<dbReference type="GO" id="GO:0045259">
    <property type="term" value="C:proton-transporting ATP synthase complex"/>
    <property type="evidence" value="ECO:0007669"/>
    <property type="project" value="UniProtKB-KW"/>
</dbReference>
<dbReference type="GO" id="GO:0046933">
    <property type="term" value="F:proton-transporting ATP synthase activity, rotational mechanism"/>
    <property type="evidence" value="ECO:0007669"/>
    <property type="project" value="UniProtKB-UniRule"/>
</dbReference>
<dbReference type="CDD" id="cd00310">
    <property type="entry name" value="ATP-synt_Fo_a_6"/>
    <property type="match status" value="1"/>
</dbReference>
<dbReference type="FunFam" id="1.20.120.220:FF:000001">
    <property type="entry name" value="ATP synthase subunit a, chloroplastic"/>
    <property type="match status" value="1"/>
</dbReference>
<dbReference type="Gene3D" id="1.20.120.220">
    <property type="entry name" value="ATP synthase, F0 complex, subunit A"/>
    <property type="match status" value="1"/>
</dbReference>
<dbReference type="HAMAP" id="MF_01393">
    <property type="entry name" value="ATP_synth_a_bact"/>
    <property type="match status" value="1"/>
</dbReference>
<dbReference type="InterPro" id="IPR045082">
    <property type="entry name" value="ATP_syn_F0_a_bact/chloroplast"/>
</dbReference>
<dbReference type="InterPro" id="IPR000568">
    <property type="entry name" value="ATP_synth_F0_asu"/>
</dbReference>
<dbReference type="InterPro" id="IPR023011">
    <property type="entry name" value="ATP_synth_F0_asu_AS"/>
</dbReference>
<dbReference type="InterPro" id="IPR035908">
    <property type="entry name" value="F0_ATP_A_sf"/>
</dbReference>
<dbReference type="NCBIfam" id="TIGR01131">
    <property type="entry name" value="ATP_synt_6_or_A"/>
    <property type="match status" value="1"/>
</dbReference>
<dbReference type="PANTHER" id="PTHR42823">
    <property type="entry name" value="ATP SYNTHASE SUBUNIT A, CHLOROPLASTIC"/>
    <property type="match status" value="1"/>
</dbReference>
<dbReference type="PANTHER" id="PTHR42823:SF3">
    <property type="entry name" value="ATP SYNTHASE SUBUNIT A, CHLOROPLASTIC"/>
    <property type="match status" value="1"/>
</dbReference>
<dbReference type="Pfam" id="PF00119">
    <property type="entry name" value="ATP-synt_A"/>
    <property type="match status" value="1"/>
</dbReference>
<dbReference type="PRINTS" id="PR00123">
    <property type="entry name" value="ATPASEA"/>
</dbReference>
<dbReference type="SUPFAM" id="SSF81336">
    <property type="entry name" value="F1F0 ATP synthase subunit A"/>
    <property type="match status" value="1"/>
</dbReference>
<dbReference type="PROSITE" id="PS00449">
    <property type="entry name" value="ATPASE_A"/>
    <property type="match status" value="1"/>
</dbReference>
<name>ATPI_BRADI</name>
<feature type="chain" id="PRO_0000362532" description="ATP synthase subunit a, chloroplastic">
    <location>
        <begin position="1"/>
        <end position="247"/>
    </location>
</feature>
<feature type="transmembrane region" description="Helical" evidence="1">
    <location>
        <begin position="38"/>
        <end position="58"/>
    </location>
</feature>
<feature type="transmembrane region" description="Helical" evidence="1">
    <location>
        <begin position="95"/>
        <end position="115"/>
    </location>
</feature>
<feature type="transmembrane region" description="Helical" evidence="1">
    <location>
        <begin position="134"/>
        <end position="154"/>
    </location>
</feature>
<feature type="transmembrane region" description="Helical" evidence="1">
    <location>
        <begin position="199"/>
        <end position="219"/>
    </location>
</feature>
<feature type="transmembrane region" description="Helical" evidence="1">
    <location>
        <begin position="220"/>
        <end position="240"/>
    </location>
</feature>